<organism>
    <name type="scientific">Pectobacterium atrosepticum (strain SCRI 1043 / ATCC BAA-672)</name>
    <name type="common">Erwinia carotovora subsp. atroseptica</name>
    <dbReference type="NCBI Taxonomy" id="218491"/>
    <lineage>
        <taxon>Bacteria</taxon>
        <taxon>Pseudomonadati</taxon>
        <taxon>Pseudomonadota</taxon>
        <taxon>Gammaproteobacteria</taxon>
        <taxon>Enterobacterales</taxon>
        <taxon>Pectobacteriaceae</taxon>
        <taxon>Pectobacterium</taxon>
    </lineage>
</organism>
<evidence type="ECO:0000250" key="1"/>
<evidence type="ECO:0000255" key="2">
    <source>
        <dbReference type="HAMAP-Rule" id="MF_00768"/>
    </source>
</evidence>
<keyword id="KW-0238">DNA-binding</keyword>
<keyword id="KW-1185">Reference proteome</keyword>
<keyword id="KW-0678">Repressor</keyword>
<keyword id="KW-0804">Transcription</keyword>
<keyword id="KW-0805">Transcription regulation</keyword>
<feature type="chain" id="PRO_0000257735" description="HTH-type transcriptional regulator BetI">
    <location>
        <begin position="1"/>
        <end position="195"/>
    </location>
</feature>
<feature type="domain" description="HTH tetR-type" evidence="2">
    <location>
        <begin position="8"/>
        <end position="68"/>
    </location>
</feature>
<feature type="DNA-binding region" description="H-T-H motif" evidence="2">
    <location>
        <begin position="31"/>
        <end position="50"/>
    </location>
</feature>
<comment type="function">
    <text evidence="1">Repressor involved in the biosynthesis of the osmoprotectant glycine betaine. It represses transcription of the choline transporter BetT and the genes of BetAB involved in the synthesis of glycine betaine (By similarity).</text>
</comment>
<comment type="pathway">
    <text>Amine and polyamine biosynthesis; betaine biosynthesis via choline pathway [regulation].</text>
</comment>
<proteinExistence type="inferred from homology"/>
<dbReference type="EMBL" id="BX950851">
    <property type="protein sequence ID" value="CAG74649.1"/>
    <property type="molecule type" value="Genomic_DNA"/>
</dbReference>
<dbReference type="RefSeq" id="WP_011093320.1">
    <property type="nucleotide sequence ID" value="NC_004547.2"/>
</dbReference>
<dbReference type="SMR" id="Q6D6E1"/>
<dbReference type="STRING" id="218491.ECA1744"/>
<dbReference type="GeneID" id="57209543"/>
<dbReference type="KEGG" id="eca:ECA1744"/>
<dbReference type="PATRIC" id="fig|218491.5.peg.1771"/>
<dbReference type="eggNOG" id="COG1309">
    <property type="taxonomic scope" value="Bacteria"/>
</dbReference>
<dbReference type="HOGENOM" id="CLU_069356_15_4_6"/>
<dbReference type="OrthoDB" id="7618612at2"/>
<dbReference type="UniPathway" id="UPA00529"/>
<dbReference type="Proteomes" id="UP000007966">
    <property type="component" value="Chromosome"/>
</dbReference>
<dbReference type="GO" id="GO:0003700">
    <property type="term" value="F:DNA-binding transcription factor activity"/>
    <property type="evidence" value="ECO:0007669"/>
    <property type="project" value="UniProtKB-UniRule"/>
</dbReference>
<dbReference type="GO" id="GO:0000976">
    <property type="term" value="F:transcription cis-regulatory region binding"/>
    <property type="evidence" value="ECO:0007669"/>
    <property type="project" value="TreeGrafter"/>
</dbReference>
<dbReference type="GO" id="GO:0019285">
    <property type="term" value="P:glycine betaine biosynthetic process from choline"/>
    <property type="evidence" value="ECO:0007669"/>
    <property type="project" value="UniProtKB-UniRule"/>
</dbReference>
<dbReference type="GO" id="GO:0045892">
    <property type="term" value="P:negative regulation of DNA-templated transcription"/>
    <property type="evidence" value="ECO:0007669"/>
    <property type="project" value="UniProtKB-UniRule"/>
</dbReference>
<dbReference type="Gene3D" id="1.10.357.10">
    <property type="entry name" value="Tetracycline Repressor, domain 2"/>
    <property type="match status" value="1"/>
</dbReference>
<dbReference type="HAMAP" id="MF_00768">
    <property type="entry name" value="HTH_type_BetI"/>
    <property type="match status" value="1"/>
</dbReference>
<dbReference type="InterPro" id="IPR039538">
    <property type="entry name" value="BetI_C"/>
</dbReference>
<dbReference type="InterPro" id="IPR023772">
    <property type="entry name" value="DNA-bd_HTH_TetR-type_CS"/>
</dbReference>
<dbReference type="InterPro" id="IPR009057">
    <property type="entry name" value="Homeodomain-like_sf"/>
</dbReference>
<dbReference type="InterPro" id="IPR050109">
    <property type="entry name" value="HTH-type_TetR-like_transc_reg"/>
</dbReference>
<dbReference type="InterPro" id="IPR001647">
    <property type="entry name" value="HTH_TetR"/>
</dbReference>
<dbReference type="InterPro" id="IPR036271">
    <property type="entry name" value="Tet_transcr_reg_TetR-rel_C_sf"/>
</dbReference>
<dbReference type="InterPro" id="IPR017757">
    <property type="entry name" value="Tscrpt_rep_BetI"/>
</dbReference>
<dbReference type="NCBIfam" id="TIGR03384">
    <property type="entry name" value="betaine_BetI"/>
    <property type="match status" value="1"/>
</dbReference>
<dbReference type="NCBIfam" id="NF001978">
    <property type="entry name" value="PRK00767.1"/>
    <property type="match status" value="1"/>
</dbReference>
<dbReference type="PANTHER" id="PTHR30055:SF234">
    <property type="entry name" value="HTH-TYPE TRANSCRIPTIONAL REGULATOR BETI"/>
    <property type="match status" value="1"/>
</dbReference>
<dbReference type="PANTHER" id="PTHR30055">
    <property type="entry name" value="HTH-TYPE TRANSCRIPTIONAL REGULATOR RUTR"/>
    <property type="match status" value="1"/>
</dbReference>
<dbReference type="Pfam" id="PF13977">
    <property type="entry name" value="TetR_C_6"/>
    <property type="match status" value="1"/>
</dbReference>
<dbReference type="Pfam" id="PF00440">
    <property type="entry name" value="TetR_N"/>
    <property type="match status" value="1"/>
</dbReference>
<dbReference type="PRINTS" id="PR00455">
    <property type="entry name" value="HTHTETR"/>
</dbReference>
<dbReference type="SUPFAM" id="SSF46689">
    <property type="entry name" value="Homeodomain-like"/>
    <property type="match status" value="1"/>
</dbReference>
<dbReference type="SUPFAM" id="SSF48498">
    <property type="entry name" value="Tetracyclin repressor-like, C-terminal domain"/>
    <property type="match status" value="1"/>
</dbReference>
<dbReference type="PROSITE" id="PS01081">
    <property type="entry name" value="HTH_TETR_1"/>
    <property type="match status" value="1"/>
</dbReference>
<dbReference type="PROSITE" id="PS50977">
    <property type="entry name" value="HTH_TETR_2"/>
    <property type="match status" value="1"/>
</dbReference>
<reference key="1">
    <citation type="journal article" date="2004" name="Proc. Natl. Acad. Sci. U.S.A.">
        <title>Genome sequence of the enterobacterial phytopathogen Erwinia carotovora subsp. atroseptica and characterization of virulence factors.</title>
        <authorList>
            <person name="Bell K.S."/>
            <person name="Sebaihia M."/>
            <person name="Pritchard L."/>
            <person name="Holden M.T.G."/>
            <person name="Hyman L.J."/>
            <person name="Holeva M.C."/>
            <person name="Thomson N.R."/>
            <person name="Bentley S.D."/>
            <person name="Churcher L.J.C."/>
            <person name="Mungall K."/>
            <person name="Atkin R."/>
            <person name="Bason N."/>
            <person name="Brooks K."/>
            <person name="Chillingworth T."/>
            <person name="Clark K."/>
            <person name="Doggett J."/>
            <person name="Fraser A."/>
            <person name="Hance Z."/>
            <person name="Hauser H."/>
            <person name="Jagels K."/>
            <person name="Moule S."/>
            <person name="Norbertczak H."/>
            <person name="Ormond D."/>
            <person name="Price C."/>
            <person name="Quail M.A."/>
            <person name="Sanders M."/>
            <person name="Walker D."/>
            <person name="Whitehead S."/>
            <person name="Salmond G.P.C."/>
            <person name="Birch P.R.J."/>
            <person name="Parkhill J."/>
            <person name="Toth I.K."/>
        </authorList>
    </citation>
    <scope>NUCLEOTIDE SEQUENCE [LARGE SCALE GENOMIC DNA]</scope>
    <source>
        <strain>SCRI 1043 / ATCC BAA-672</strain>
    </source>
</reference>
<protein>
    <recommendedName>
        <fullName evidence="2">HTH-type transcriptional regulator BetI</fullName>
    </recommendedName>
</protein>
<accession>Q6D6E1</accession>
<sequence length="195" mass="21839">MPKVGMQPIRRQQLIEATLAAINDVGMHDASIVQIARRAGVSNGIISHYFRDKNGLLEATMRYLISHLGLAVKSRLLNLTENTPRARLRAIVQGNFDDSQTNSAAMKTWLAFWASSLHSPMLHRLQQVNDRRLYSNLSVEFSRCLPKDKARIAAKGVAGLIDGLWLRGALSHNVFNCEEALSITYDYIDQQLTHA</sequence>
<gene>
    <name evidence="2" type="primary">betI</name>
    <name type="ordered locus">ECA1744</name>
</gene>
<name>BETI_PECAS</name>